<protein>
    <recommendedName>
        <fullName>Chlorophyll a-b binding protein 1B, chloroplastic</fullName>
    </recommendedName>
    <alternativeName>
        <fullName>LHCII type I CAB-1B</fullName>
        <shortName>LHCP</shortName>
    </alternativeName>
</protein>
<dbReference type="EMBL" id="M14443">
    <property type="protein sequence ID" value="AAA34147.1"/>
    <property type="molecule type" value="Genomic_DNA"/>
</dbReference>
<dbReference type="PIR" id="B24039">
    <property type="entry name" value="CDTO1B"/>
</dbReference>
<dbReference type="RefSeq" id="NP_001316856.1">
    <property type="nucleotide sequence ID" value="NM_001329927.1"/>
</dbReference>
<dbReference type="RefSeq" id="XP_004233099.1">
    <property type="nucleotide sequence ID" value="XM_004233051.3"/>
</dbReference>
<dbReference type="RefSeq" id="XP_010316910.1">
    <property type="nucleotide sequence ID" value="XM_010318608.2"/>
</dbReference>
<dbReference type="RefSeq" id="XP_010316913.1">
    <property type="nucleotide sequence ID" value="XM_010318611.2"/>
</dbReference>
<dbReference type="SMR" id="P07370"/>
<dbReference type="FunCoup" id="P07370">
    <property type="interactions" value="1040"/>
</dbReference>
<dbReference type="STRING" id="4081.P07370"/>
<dbReference type="PaxDb" id="4081-Solyc02g070940.1.1"/>
<dbReference type="GeneID" id="101264784"/>
<dbReference type="KEGG" id="sly:101264784"/>
<dbReference type="KEGG" id="sly:101265886"/>
<dbReference type="eggNOG" id="ENOG502QPU1">
    <property type="taxonomic scope" value="Eukaryota"/>
</dbReference>
<dbReference type="HOGENOM" id="CLU_057943_2_0_1"/>
<dbReference type="InParanoid" id="P07370"/>
<dbReference type="OrthoDB" id="423598at2759"/>
<dbReference type="PhylomeDB" id="P07370"/>
<dbReference type="Proteomes" id="UP000004994">
    <property type="component" value="Unplaced"/>
</dbReference>
<dbReference type="ExpressionAtlas" id="P07370">
    <property type="expression patterns" value="baseline and differential"/>
</dbReference>
<dbReference type="GO" id="GO:0009535">
    <property type="term" value="C:chloroplast thylakoid membrane"/>
    <property type="evidence" value="ECO:0000318"/>
    <property type="project" value="GO_Central"/>
</dbReference>
<dbReference type="GO" id="GO:0009522">
    <property type="term" value="C:photosystem I"/>
    <property type="evidence" value="ECO:0007669"/>
    <property type="project" value="UniProtKB-KW"/>
</dbReference>
<dbReference type="GO" id="GO:0009523">
    <property type="term" value="C:photosystem II"/>
    <property type="evidence" value="ECO:0007669"/>
    <property type="project" value="UniProtKB-KW"/>
</dbReference>
<dbReference type="GO" id="GO:0016168">
    <property type="term" value="F:chlorophyll binding"/>
    <property type="evidence" value="ECO:0007669"/>
    <property type="project" value="UniProtKB-KW"/>
</dbReference>
<dbReference type="GO" id="GO:0046872">
    <property type="term" value="F:metal ion binding"/>
    <property type="evidence" value="ECO:0007669"/>
    <property type="project" value="UniProtKB-KW"/>
</dbReference>
<dbReference type="GO" id="GO:0009768">
    <property type="term" value="P:photosynthesis, light harvesting in photosystem I"/>
    <property type="evidence" value="ECO:0000318"/>
    <property type="project" value="GO_Central"/>
</dbReference>
<dbReference type="GO" id="GO:0009416">
    <property type="term" value="P:response to light stimulus"/>
    <property type="evidence" value="ECO:0000318"/>
    <property type="project" value="GO_Central"/>
</dbReference>
<dbReference type="FunFam" id="1.10.3460.10:FF:000001">
    <property type="entry name" value="Chlorophyll a-b binding protein, chloroplastic"/>
    <property type="match status" value="1"/>
</dbReference>
<dbReference type="Gene3D" id="1.10.3460.10">
    <property type="entry name" value="Chlorophyll a/b binding protein domain"/>
    <property type="match status" value="1"/>
</dbReference>
<dbReference type="InterPro" id="IPR001344">
    <property type="entry name" value="Chloro_AB-bd_pln"/>
</dbReference>
<dbReference type="InterPro" id="IPR022796">
    <property type="entry name" value="Chloroa_b-bind"/>
</dbReference>
<dbReference type="PANTHER" id="PTHR21649">
    <property type="entry name" value="CHLOROPHYLL A/B BINDING PROTEIN"/>
    <property type="match status" value="1"/>
</dbReference>
<dbReference type="Pfam" id="PF00504">
    <property type="entry name" value="Chloroa_b-bind"/>
    <property type="match status" value="1"/>
</dbReference>
<dbReference type="SUPFAM" id="SSF103511">
    <property type="entry name" value="Chlorophyll a-b binding protein"/>
    <property type="match status" value="1"/>
</dbReference>
<organism>
    <name type="scientific">Solanum lycopersicum</name>
    <name type="common">Tomato</name>
    <name type="synonym">Lycopersicon esculentum</name>
    <dbReference type="NCBI Taxonomy" id="4081"/>
    <lineage>
        <taxon>Eukaryota</taxon>
        <taxon>Viridiplantae</taxon>
        <taxon>Streptophyta</taxon>
        <taxon>Embryophyta</taxon>
        <taxon>Tracheophyta</taxon>
        <taxon>Spermatophyta</taxon>
        <taxon>Magnoliopsida</taxon>
        <taxon>eudicotyledons</taxon>
        <taxon>Gunneridae</taxon>
        <taxon>Pentapetalae</taxon>
        <taxon>asterids</taxon>
        <taxon>lamiids</taxon>
        <taxon>Solanales</taxon>
        <taxon>Solanaceae</taxon>
        <taxon>Solanoideae</taxon>
        <taxon>Solaneae</taxon>
        <taxon>Solanum</taxon>
        <taxon>Solanum subgen. Lycopersicon</taxon>
    </lineage>
</organism>
<evidence type="ECO:0000250" key="1"/>
<evidence type="ECO:0000250" key="2">
    <source>
        <dbReference type="UniProtKB" id="P07371"/>
    </source>
</evidence>
<evidence type="ECO:0000250" key="3">
    <source>
        <dbReference type="UniProtKB" id="P12333"/>
    </source>
</evidence>
<evidence type="ECO:0000255" key="4"/>
<evidence type="ECO:0000305" key="5"/>
<feature type="transit peptide" description="Chloroplast" evidence="1">
    <location>
        <begin position="1"/>
        <end position="35"/>
    </location>
</feature>
<feature type="chain" id="PRO_0000003663" description="Chlorophyll a-b binding protein 1B, chloroplastic">
    <location>
        <begin position="36"/>
        <end position="265"/>
    </location>
</feature>
<feature type="transmembrane region" description="Helical" evidence="4">
    <location>
        <begin position="99"/>
        <end position="119"/>
    </location>
</feature>
<feature type="transmembrane region" description="Helical" evidence="4">
    <location>
        <begin position="151"/>
        <end position="171"/>
    </location>
</feature>
<feature type="transmembrane region" description="Helical" evidence="4">
    <location>
        <begin position="219"/>
        <end position="239"/>
    </location>
</feature>
<feature type="binding site" description="axial binding residue" evidence="3">
    <location>
        <position position="57"/>
    </location>
    <ligand>
        <name>chlorophyll b</name>
        <dbReference type="ChEBI" id="CHEBI:61721"/>
        <label>1</label>
    </ligand>
    <ligandPart>
        <name>Mg</name>
        <dbReference type="ChEBI" id="CHEBI:25107"/>
    </ligandPart>
</feature>
<feature type="binding site" evidence="1">
    <location>
        <position position="79"/>
    </location>
    <ligand>
        <name>chlorophyll a</name>
        <dbReference type="ChEBI" id="CHEBI:58416"/>
        <label>1</label>
    </ligand>
</feature>
<feature type="binding site" evidence="1">
    <location>
        <position position="85"/>
    </location>
    <ligand>
        <name>chlorophyll a</name>
        <dbReference type="ChEBI" id="CHEBI:58416"/>
        <label>1</label>
    </ligand>
</feature>
<feature type="binding site" description="axial binding residue" evidence="3">
    <location>
        <position position="98"/>
    </location>
    <ligand>
        <name>chlorophyll a</name>
        <dbReference type="ChEBI" id="CHEBI:58416"/>
        <label>1</label>
    </ligand>
    <ligandPart>
        <name>Mg</name>
        <dbReference type="ChEBI" id="CHEBI:25107"/>
    </ligandPart>
</feature>
<feature type="binding site" description="axial binding residue" evidence="3">
    <location>
        <position position="101"/>
    </location>
    <ligand>
        <name>chlorophyll a</name>
        <dbReference type="ChEBI" id="CHEBI:58416"/>
        <label>2</label>
    </ligand>
    <ligandPart>
        <name>Mg</name>
        <dbReference type="ChEBI" id="CHEBI:25107"/>
    </ligandPart>
</feature>
<feature type="binding site" evidence="1">
    <location>
        <position position="103"/>
    </location>
    <ligand>
        <name>chlorophyll b</name>
        <dbReference type="ChEBI" id="CHEBI:61721"/>
        <label>2</label>
    </ligand>
</feature>
<feature type="binding site" evidence="1">
    <location>
        <position position="136"/>
    </location>
    <ligand>
        <name>chlorophyll a</name>
        <dbReference type="ChEBI" id="CHEBI:58416"/>
        <label>3</label>
    </ligand>
</feature>
<feature type="binding site" evidence="1">
    <location>
        <position position="146"/>
    </location>
    <ligand>
        <name>chlorophyll a</name>
        <dbReference type="ChEBI" id="CHEBI:58416"/>
        <label>3</label>
    </ligand>
</feature>
<feature type="binding site" description="axial binding residue" evidence="3">
    <location>
        <position position="152"/>
    </location>
    <ligand>
        <name>chlorophyll b</name>
        <dbReference type="ChEBI" id="CHEBI:61721"/>
        <label>2</label>
    </ligand>
    <ligandPart>
        <name>Mg</name>
        <dbReference type="ChEBI" id="CHEBI:25107"/>
    </ligandPart>
</feature>
<feature type="binding site" evidence="1">
    <location>
        <position position="156"/>
    </location>
    <ligand>
        <name>chlorophyll b</name>
        <dbReference type="ChEBI" id="CHEBI:61721"/>
        <label>3</label>
    </ligand>
</feature>
<feature type="binding site" evidence="1">
    <location>
        <position position="164"/>
    </location>
    <ligand>
        <name>chlorophyll b</name>
        <dbReference type="ChEBI" id="CHEBI:61721"/>
        <label>4</label>
    </ligand>
</feature>
<feature type="binding site" evidence="2">
    <location>
        <position position="164"/>
    </location>
    <ligand>
        <name>chlorophyll b</name>
        <dbReference type="ChEBI" id="CHEBI:61721"/>
        <label>5</label>
    </ligand>
</feature>
<feature type="binding site" description="axial binding residue" evidence="3">
    <location>
        <position position="172"/>
    </location>
    <ligand>
        <name>chlorophyll b</name>
        <dbReference type="ChEBI" id="CHEBI:61721"/>
        <label>3</label>
    </ligand>
    <ligandPart>
        <name>Mg</name>
        <dbReference type="ChEBI" id="CHEBI:25107"/>
    </ligandPart>
</feature>
<feature type="binding site" evidence="1">
    <location>
        <position position="175"/>
    </location>
    <ligand>
        <name>chlorophyll b</name>
        <dbReference type="ChEBI" id="CHEBI:61721"/>
        <label>4</label>
    </ligand>
</feature>
<feature type="binding site" evidence="1">
    <location>
        <position position="181"/>
    </location>
    <ligand>
        <name>chlorophyll b</name>
        <dbReference type="ChEBI" id="CHEBI:61721"/>
        <label>2</label>
    </ligand>
</feature>
<feature type="binding site" evidence="1">
    <location>
        <position position="212"/>
    </location>
    <ligand>
        <name>chlorophyll a</name>
        <dbReference type="ChEBI" id="CHEBI:58416"/>
        <label>5</label>
    </ligand>
</feature>
<feature type="binding site" description="axial binding residue" evidence="3">
    <location>
        <position position="213"/>
    </location>
    <ligand>
        <name>chlorophyll a</name>
        <dbReference type="ChEBI" id="CHEBI:58416"/>
        <label>3</label>
    </ligand>
    <ligandPart>
        <name>Mg</name>
        <dbReference type="ChEBI" id="CHEBI:25107"/>
    </ligandPart>
</feature>
<feature type="binding site" description="axial binding residue" evidence="3">
    <location>
        <position position="216"/>
    </location>
    <ligand>
        <name>chlorophyll a</name>
        <dbReference type="ChEBI" id="CHEBI:58416"/>
        <label>4</label>
    </ligand>
    <ligandPart>
        <name>Mg</name>
        <dbReference type="ChEBI" id="CHEBI:25107"/>
    </ligandPart>
</feature>
<feature type="binding site" evidence="1">
    <location>
        <position position="218"/>
    </location>
    <ligand>
        <name>chlorophyll a</name>
        <dbReference type="ChEBI" id="CHEBI:58416"/>
        <label>1</label>
    </ligand>
</feature>
<feature type="binding site" description="axial binding residue" evidence="3">
    <location>
        <position position="230"/>
    </location>
    <ligand>
        <name>chlorophyll a</name>
        <dbReference type="ChEBI" id="CHEBI:58416"/>
        <label>5</label>
    </ligand>
    <ligandPart>
        <name>Mg</name>
        <dbReference type="ChEBI" id="CHEBI:25107"/>
    </ligandPart>
</feature>
<feature type="binding site" description="axial binding residue" evidence="3">
    <location>
        <position position="245"/>
    </location>
    <ligand>
        <name>chlorophyll a</name>
        <dbReference type="ChEBI" id="CHEBI:58416"/>
        <label>6</label>
    </ligand>
    <ligandPart>
        <name>Mg</name>
        <dbReference type="ChEBI" id="CHEBI:25107"/>
    </ligandPart>
</feature>
<feature type="binding site" evidence="1">
    <location>
        <position position="254"/>
    </location>
    <ligand>
        <name>chlorophyll a</name>
        <dbReference type="ChEBI" id="CHEBI:58416"/>
        <label>6</label>
    </ligand>
</feature>
<feature type="binding site" evidence="1">
    <location>
        <position position="261"/>
    </location>
    <ligand>
        <name>chlorophyll b</name>
        <dbReference type="ChEBI" id="CHEBI:61721"/>
        <label>5</label>
    </ligand>
</feature>
<feature type="modified residue" description="N2-acetylarginine" evidence="1">
    <location>
        <position position="36"/>
    </location>
</feature>
<keyword id="KW-0007">Acetylation</keyword>
<keyword id="KW-0148">Chlorophyll</keyword>
<keyword id="KW-0150">Chloroplast</keyword>
<keyword id="KW-0157">Chromophore</keyword>
<keyword id="KW-0460">Magnesium</keyword>
<keyword id="KW-0472">Membrane</keyword>
<keyword id="KW-0479">Metal-binding</keyword>
<keyword id="KW-0597">Phosphoprotein</keyword>
<keyword id="KW-0602">Photosynthesis</keyword>
<keyword id="KW-0603">Photosystem I</keyword>
<keyword id="KW-0604">Photosystem II</keyword>
<keyword id="KW-0934">Plastid</keyword>
<keyword id="KW-1185">Reference proteome</keyword>
<keyword id="KW-0793">Thylakoid</keyword>
<keyword id="KW-0809">Transit peptide</keyword>
<keyword id="KW-0812">Transmembrane</keyword>
<keyword id="KW-1133">Transmembrane helix</keyword>
<name>CB2B_SOLLC</name>
<comment type="function">
    <text>The light-harvesting complex (LHC) functions as a light receptor, it captures and delivers excitation energy to photosystems with which it is closely associated.</text>
</comment>
<comment type="cofactor">
    <text evidence="1">Binds at least 14 chlorophylls (8 Chl-a and 6 Chl-b) and carotenoids such as lutein and neoxanthin.</text>
</comment>
<comment type="subunit">
    <text>The LHC complex consists of chlorophyll a-b binding proteins.</text>
</comment>
<comment type="subcellular location">
    <subcellularLocation>
        <location>Plastid</location>
        <location>Chloroplast thylakoid membrane</location>
        <topology>Multi-pass membrane protein</topology>
    </subcellularLocation>
</comment>
<comment type="domain">
    <text>The N-terminus of the protein extends into the stroma where it is involved with adhesion of granal membranes and post-translational modifications; both are believed to mediate the distribution of excitation energy between photosystems I and II.</text>
</comment>
<comment type="PTM">
    <text evidence="1">Photoregulated by reversible phosphorylation of its threonine residues.</text>
</comment>
<comment type="similarity">
    <text evidence="5">Belongs to the light-harvesting chlorophyll a/b-binding (LHC) protein family.</text>
</comment>
<proteinExistence type="inferred from homology"/>
<sequence>MAAATMALSSPSFAGQAVKLSPSASEISGNGRITMRKAVAKSAPSSSPWYGPDRVKYLGPFSGESPSYLTGEFPGDYGWDTAGLSADPETFAKNRELEVIHCRWAMLGALGCVFPELLARNGVKFGEAVWFKAGSQIFSEGGLDYLGNPSLVHAQSILAIWACQVVLMGAVEGYRIAGGPLGEVVDPLYPGGSFDPLGLAEDPEAFAELKVKEIKNGRLAMFSMFGFFVQAIVTGKGPLENLADHLADPVNNNAWAFATNFVPGK</sequence>
<reference key="1">
    <citation type="journal article" date="1985" name="Gene">
        <title>Molecular characterization and genetic mapping of two clusters of genes encoding chlorophyll a/b-binding proteins in Lycopersicon esculentum (tomato).</title>
        <authorList>
            <person name="Pichersky E."/>
            <person name="Bernatzky R."/>
            <person name="Tanksley S.D."/>
            <person name="Breidenbach R.B."/>
            <person name="Kausch A.P."/>
            <person name="Cashmore A.R."/>
        </authorList>
    </citation>
    <scope>NUCLEOTIDE SEQUENCE [GENOMIC DNA]</scope>
    <source>
        <strain>cv. T6</strain>
    </source>
</reference>
<gene>
    <name type="primary">CAB1B</name>
</gene>
<accession>P07370</accession>